<feature type="signal peptide" evidence="4">
    <location>
        <begin position="1"/>
        <end position="22"/>
    </location>
</feature>
<feature type="chain" id="PRO_5003144917" description="Secreted triacylglycerol lipase LIP2">
    <location>
        <begin position="23"/>
        <end position="468"/>
    </location>
</feature>
<feature type="active site" description="Nucleophile" evidence="1">
    <location>
        <position position="209"/>
    </location>
</feature>
<feature type="active site" evidence="1">
    <location>
        <position position="355"/>
    </location>
</feature>
<feature type="active site" evidence="1">
    <location>
        <position position="389"/>
    </location>
</feature>
<feature type="glycosylation site" description="N-linked (GlcNAc...) asparagine" evidence="5">
    <location>
        <position position="242"/>
    </location>
</feature>
<feature type="glycosylation site" description="N-linked (GlcNAc...) asparagine" evidence="5">
    <location>
        <position position="252"/>
    </location>
</feature>
<feature type="glycosylation site" description="N-linked (GlcNAc...) asparagine" evidence="5">
    <location>
        <position position="279"/>
    </location>
</feature>
<feature type="disulfide bond" evidence="3">
    <location>
        <begin position="125"/>
        <end position="295"/>
    </location>
</feature>
<gene>
    <name evidence="8" type="primary">LIP2</name>
</gene>
<sequence length="468" mass="51205">MFGFRLFILAAVALAYIQCAAARMTVAHRLGARSLPTPENDPFYTPDDGWESAAPGTILKKREITVANSGVFQYGVRGFQLLYRTSGVNRGDASHTVTTVIIPENYDKDKLVSANMYEDSYSSNCAPSYSMRKGSKVFNDLANSYQMLFITTLLHEGWAVTVPDHEGPNNAFTSGRVEGHAILDGIRATLNYKKLGLNSDAKVIGYGYSGGALATGWAASLHSQYAHELNVAGWSMGGTVSNVTEWLGYIDNTTGAGFALASLGGLSSSYSELAWVQDNLTSKGRRLLDQSAQNCMYQNLWAVGKQKILDDSVFAGGSTFLQNDGALNILNKLTLGRFSKFVPIAPVFMFHATHDEVVPFNMAITTADAWCAQGAQIKFLSNTGSEMEHTNTELFNLPNVIFFMRDRFKGKDFGGQCQYPSSNDPWFNPQILGTSAAIYLQQVLDLIGNRIGGHDSILWDKVHSKQQP</sequence>
<reference key="1">
    <citation type="submission" date="2010-07" db="EMBL/GenBank/DDBJ databases">
        <title>Malassezia furfur lipase gene family.</title>
        <authorList>
            <person name="Shibata N."/>
            <person name="Tsugawa H."/>
            <person name="Okawa Y."/>
        </authorList>
    </citation>
    <scope>NUCLEOTIDE SEQUENCE [GENOMIC DNA]</scope>
    <source>
        <strain>NBRC 0656</strain>
    </source>
</reference>
<reference key="2">
    <citation type="journal article" date="2020" name="Microbiology">
        <title>Ambient pH regulates secretion of lipases in Malassezia furfur.</title>
        <authorList>
            <person name="Juntachai W."/>
            <person name="Chaichompoo A."/>
            <person name="Chanarat S."/>
        </authorList>
    </citation>
    <scope>INDUCTION</scope>
</reference>
<name>LIP2_MALFU</name>
<protein>
    <recommendedName>
        <fullName evidence="7">Secreted triacylglycerol lipase LIP2</fullName>
        <ecNumber evidence="10">3.1.1.-</ecNumber>
        <ecNumber evidence="10">3.1.1.3</ecNumber>
    </recommendedName>
</protein>
<comment type="function">
    <text evidence="2 10">Secreted lipase that hydrolyzes acylglycerol lipids such as triacylglycerols and consequently releases free fatty acid (By similarity). Due to an absence of fatty acid synthase genes in Malassezia species, secretory lipases are essential for the yeast to generate free fatty acids from degradation of sebum and assimilate them as lipid sources for growth (Probable). Plays important roles not only in lipid metabolism but also in the immune response of host cells and pathogenesis (Probable).</text>
</comment>
<comment type="catalytic activity">
    <reaction evidence="10">
        <text>a triacylglycerol + H2O = a diacylglycerol + a fatty acid + H(+)</text>
        <dbReference type="Rhea" id="RHEA:12044"/>
        <dbReference type="ChEBI" id="CHEBI:15377"/>
        <dbReference type="ChEBI" id="CHEBI:15378"/>
        <dbReference type="ChEBI" id="CHEBI:17855"/>
        <dbReference type="ChEBI" id="CHEBI:18035"/>
        <dbReference type="ChEBI" id="CHEBI:28868"/>
        <dbReference type="EC" id="3.1.1.3"/>
    </reaction>
</comment>
<comment type="catalytic activity">
    <reaction evidence="10">
        <text>a monoacylglycerol + H2O = glycerol + a fatty acid + H(+)</text>
        <dbReference type="Rhea" id="RHEA:15245"/>
        <dbReference type="ChEBI" id="CHEBI:15377"/>
        <dbReference type="ChEBI" id="CHEBI:15378"/>
        <dbReference type="ChEBI" id="CHEBI:17408"/>
        <dbReference type="ChEBI" id="CHEBI:17754"/>
        <dbReference type="ChEBI" id="CHEBI:28868"/>
    </reaction>
</comment>
<comment type="catalytic activity">
    <reaction evidence="10">
        <text>a diacylglycerol + H2O = a monoacylglycerol + a fatty acid + H(+)</text>
        <dbReference type="Rhea" id="RHEA:32731"/>
        <dbReference type="ChEBI" id="CHEBI:15377"/>
        <dbReference type="ChEBI" id="CHEBI:15378"/>
        <dbReference type="ChEBI" id="CHEBI:17408"/>
        <dbReference type="ChEBI" id="CHEBI:18035"/>
        <dbReference type="ChEBI" id="CHEBI:28868"/>
    </reaction>
</comment>
<comment type="subcellular location">
    <subcellularLocation>
        <location evidence="10">Secreted</location>
    </subcellularLocation>
</comment>
<comment type="induction">
    <text evidence="6">Constitutively expressed regardless of pH conditions or exposure time.</text>
</comment>
<comment type="similarity">
    <text evidence="9">Belongs to the AB hydrolase superfamily. Lipase family. Class Lip subfamily.</text>
</comment>
<organism>
    <name type="scientific">Malassezia furfur</name>
    <name type="common">Pityriasis versicolor infection agent</name>
    <name type="synonym">Pityrosporum furfur</name>
    <dbReference type="NCBI Taxonomy" id="55194"/>
    <lineage>
        <taxon>Eukaryota</taxon>
        <taxon>Fungi</taxon>
        <taxon>Dikarya</taxon>
        <taxon>Basidiomycota</taxon>
        <taxon>Ustilaginomycotina</taxon>
        <taxon>Malasseziomycetes</taxon>
        <taxon>Malasseziales</taxon>
        <taxon>Malasseziaceae</taxon>
        <taxon>Malassezia</taxon>
    </lineage>
</organism>
<keyword id="KW-1015">Disulfide bond</keyword>
<keyword id="KW-0325">Glycoprotein</keyword>
<keyword id="KW-0378">Hydrolase</keyword>
<keyword id="KW-0442">Lipid degradation</keyword>
<keyword id="KW-0443">Lipid metabolism</keyword>
<keyword id="KW-0964">Secreted</keyword>
<keyword id="KW-0732">Signal</keyword>
<keyword id="KW-0843">Virulence</keyword>
<dbReference type="EC" id="3.1.1.-" evidence="10"/>
<dbReference type="EC" id="3.1.1.3" evidence="10"/>
<dbReference type="EMBL" id="AB573428">
    <property type="protein sequence ID" value="BAJ13316.1"/>
    <property type="molecule type" value="Genomic_DNA"/>
</dbReference>
<dbReference type="SMR" id="E1CJK0"/>
<dbReference type="ESTHER" id="malfu-e1cjk0">
    <property type="family name" value="Fungal-Bact_LIP"/>
</dbReference>
<dbReference type="GO" id="GO:0005576">
    <property type="term" value="C:extracellular region"/>
    <property type="evidence" value="ECO:0007669"/>
    <property type="project" value="UniProtKB-SubCell"/>
</dbReference>
<dbReference type="GO" id="GO:0004806">
    <property type="term" value="F:triacylglycerol lipase activity"/>
    <property type="evidence" value="ECO:0007669"/>
    <property type="project" value="InterPro"/>
</dbReference>
<dbReference type="GO" id="GO:0016042">
    <property type="term" value="P:lipid catabolic process"/>
    <property type="evidence" value="ECO:0007669"/>
    <property type="project" value="UniProtKB-KW"/>
</dbReference>
<dbReference type="Gene3D" id="1.10.260.130">
    <property type="match status" value="1"/>
</dbReference>
<dbReference type="Gene3D" id="3.40.50.1820">
    <property type="entry name" value="alpha/beta hydrolase"/>
    <property type="match status" value="1"/>
</dbReference>
<dbReference type="InterPro" id="IPR029058">
    <property type="entry name" value="AB_hydrolase_fold"/>
</dbReference>
<dbReference type="InterPro" id="IPR005152">
    <property type="entry name" value="Lipase_secreted"/>
</dbReference>
<dbReference type="PANTHER" id="PTHR34853">
    <property type="match status" value="1"/>
</dbReference>
<dbReference type="PANTHER" id="PTHR34853:SF1">
    <property type="entry name" value="LIPASE 5"/>
    <property type="match status" value="1"/>
</dbReference>
<dbReference type="Pfam" id="PF03583">
    <property type="entry name" value="LIP"/>
    <property type="match status" value="1"/>
</dbReference>
<dbReference type="PIRSF" id="PIRSF029171">
    <property type="entry name" value="Esterase_LipA"/>
    <property type="match status" value="1"/>
</dbReference>
<dbReference type="SUPFAM" id="SSF53474">
    <property type="entry name" value="alpha/beta-Hydrolases"/>
    <property type="match status" value="1"/>
</dbReference>
<accession>E1CJK0</accession>
<evidence type="ECO:0000250" key="1">
    <source>
        <dbReference type="UniProtKB" id="A8QCW4"/>
    </source>
</evidence>
<evidence type="ECO:0000250" key="2">
    <source>
        <dbReference type="UniProtKB" id="Q2VG90"/>
    </source>
</evidence>
<evidence type="ECO:0000250" key="3">
    <source>
        <dbReference type="UniProtKB" id="W3VKA4"/>
    </source>
</evidence>
<evidence type="ECO:0000255" key="4"/>
<evidence type="ECO:0000255" key="5">
    <source>
        <dbReference type="PROSITE-ProRule" id="PRU00498"/>
    </source>
</evidence>
<evidence type="ECO:0000269" key="6">
    <source>
    </source>
</evidence>
<evidence type="ECO:0000303" key="7">
    <source>
    </source>
</evidence>
<evidence type="ECO:0000303" key="8">
    <source ref="1"/>
</evidence>
<evidence type="ECO:0000305" key="9"/>
<evidence type="ECO:0000305" key="10">
    <source>
    </source>
</evidence>
<proteinExistence type="evidence at transcript level"/>